<sequence length="282" mass="30950">MMASNVTNKTDPRSMNSRVFIGNLNTLVVKKTDVEAIFSKYGKIVGCSVHKGFAFVQFSNERTARTAVAGEDGRMIAGQVLDINLAAEPKANRSKTGVKRSAADMYGSSFDLEYDFPRDYYDSYSATRVPAPPPLARAVVPSKRQRVSGNASRRGKSGFNSKSGQRGGSSKSSRLKGDDLQAIKKELSQIKQRVDSLLENLERIERDQSKQDTKLDDDQSSVSLKKEETGVKLIEETGDSAEEGDLLDDDEQGEDTLEEIKDGDKETEEGEDEGDSANEEDS</sequence>
<organism>
    <name type="scientific">Xenopus laevis</name>
    <name type="common">African clawed frog</name>
    <dbReference type="NCBI Taxonomy" id="8355"/>
    <lineage>
        <taxon>Eukaryota</taxon>
        <taxon>Metazoa</taxon>
        <taxon>Chordata</taxon>
        <taxon>Craniata</taxon>
        <taxon>Vertebrata</taxon>
        <taxon>Euteleostomi</taxon>
        <taxon>Amphibia</taxon>
        <taxon>Batrachia</taxon>
        <taxon>Anura</taxon>
        <taxon>Pipoidea</taxon>
        <taxon>Pipidae</taxon>
        <taxon>Xenopodinae</taxon>
        <taxon>Xenopus</taxon>
        <taxon>Xenopus</taxon>
    </lineage>
</organism>
<keyword id="KW-0175">Coiled coil</keyword>
<keyword id="KW-0539">Nucleus</keyword>
<keyword id="KW-1185">Reference proteome</keyword>
<keyword id="KW-0687">Ribonucleoprotein</keyword>
<keyword id="KW-0694">RNA-binding</keyword>
<dbReference type="EMBL" id="J03831">
    <property type="protein sequence ID" value="AAA60937.1"/>
    <property type="molecule type" value="mRNA"/>
</dbReference>
<dbReference type="EMBL" id="BC071084">
    <property type="protein sequence ID" value="AAH71084.1"/>
    <property type="molecule type" value="mRNA"/>
</dbReference>
<dbReference type="PIR" id="A31765">
    <property type="entry name" value="A31765"/>
</dbReference>
<dbReference type="RefSeq" id="NP_001081360.1">
    <property type="nucleotide sequence ID" value="NM_001087891.1"/>
</dbReference>
<dbReference type="RefSeq" id="XP_018086485.1">
    <property type="nucleotide sequence ID" value="XM_018230996.1"/>
</dbReference>
<dbReference type="RefSeq" id="XP_018086563.1">
    <property type="nucleotide sequence ID" value="XM_018231074.1"/>
</dbReference>
<dbReference type="SMR" id="P19600"/>
<dbReference type="BioGRID" id="99132">
    <property type="interactions" value="1"/>
</dbReference>
<dbReference type="DNASU" id="397793"/>
<dbReference type="GeneID" id="397793"/>
<dbReference type="KEGG" id="xla:397793"/>
<dbReference type="AGR" id="Xenbase:XB-GENE-489145"/>
<dbReference type="CTD" id="397793"/>
<dbReference type="Xenbase" id="XB-GENE-489145">
    <property type="gene designation" value="hnrnpc.L"/>
</dbReference>
<dbReference type="OMA" id="DYYGRMY"/>
<dbReference type="OrthoDB" id="6730379at2759"/>
<dbReference type="Proteomes" id="UP000186698">
    <property type="component" value="Chromosome 1L"/>
</dbReference>
<dbReference type="Bgee" id="397793">
    <property type="expression patterns" value="Expressed in gastrula and 19 other cell types or tissues"/>
</dbReference>
<dbReference type="GO" id="GO:0005634">
    <property type="term" value="C:nucleus"/>
    <property type="evidence" value="ECO:0000318"/>
    <property type="project" value="GO_Central"/>
</dbReference>
<dbReference type="GO" id="GO:1990904">
    <property type="term" value="C:ribonucleoprotein complex"/>
    <property type="evidence" value="ECO:0007669"/>
    <property type="project" value="UniProtKB-KW"/>
</dbReference>
<dbReference type="GO" id="GO:1990247">
    <property type="term" value="F:N6-methyladenosine-containing RNA reader activity"/>
    <property type="evidence" value="ECO:0000250"/>
    <property type="project" value="UniProtKB"/>
</dbReference>
<dbReference type="GO" id="GO:0003723">
    <property type="term" value="F:RNA binding"/>
    <property type="evidence" value="ECO:0000318"/>
    <property type="project" value="GO_Central"/>
</dbReference>
<dbReference type="GO" id="GO:0000398">
    <property type="term" value="P:mRNA splicing, via spliceosome"/>
    <property type="evidence" value="ECO:0000250"/>
    <property type="project" value="UniProtKB"/>
</dbReference>
<dbReference type="CDD" id="cd12603">
    <property type="entry name" value="RRM_hnRNPC"/>
    <property type="match status" value="1"/>
</dbReference>
<dbReference type="FunFam" id="3.30.70.330:FF:000019">
    <property type="entry name" value="heterogeneous nuclear ribonucleoproteins C1/C2 isoform X1"/>
    <property type="match status" value="1"/>
</dbReference>
<dbReference type="Gene3D" id="3.30.70.330">
    <property type="match status" value="1"/>
</dbReference>
<dbReference type="InterPro" id="IPR017347">
    <property type="entry name" value="hnRNP_C"/>
</dbReference>
<dbReference type="InterPro" id="IPR012677">
    <property type="entry name" value="Nucleotide-bd_a/b_plait_sf"/>
</dbReference>
<dbReference type="InterPro" id="IPR035979">
    <property type="entry name" value="RBD_domain_sf"/>
</dbReference>
<dbReference type="InterPro" id="IPR036305">
    <property type="entry name" value="RGS_sf"/>
</dbReference>
<dbReference type="InterPro" id="IPR000504">
    <property type="entry name" value="RRM_dom"/>
</dbReference>
<dbReference type="InterPro" id="IPR051186">
    <property type="entry name" value="RRM_HNRPC/RALY_subfam"/>
</dbReference>
<dbReference type="PANTHER" id="PTHR13968">
    <property type="entry name" value="HETEROGENEOUS NUCLEAR RIBONUCLEOPROTEIN"/>
    <property type="match status" value="1"/>
</dbReference>
<dbReference type="PANTHER" id="PTHR13968:SF3">
    <property type="entry name" value="HETEROGENEOUS NUCLEAR RIBONUCLEOPROTEINS C1_C2"/>
    <property type="match status" value="1"/>
</dbReference>
<dbReference type="Pfam" id="PF00076">
    <property type="entry name" value="RRM_1"/>
    <property type="match status" value="1"/>
</dbReference>
<dbReference type="PIRSF" id="PIRSF037992">
    <property type="entry name" value="hnRNP-C_Raly"/>
    <property type="match status" value="1"/>
</dbReference>
<dbReference type="SMART" id="SM00360">
    <property type="entry name" value="RRM"/>
    <property type="match status" value="1"/>
</dbReference>
<dbReference type="SUPFAM" id="SSF48097">
    <property type="entry name" value="Regulator of G-protein signaling, RGS"/>
    <property type="match status" value="1"/>
</dbReference>
<dbReference type="SUPFAM" id="SSF54928">
    <property type="entry name" value="RNA-binding domain, RBD"/>
    <property type="match status" value="1"/>
</dbReference>
<dbReference type="PROSITE" id="PS50102">
    <property type="entry name" value="RRM"/>
    <property type="match status" value="1"/>
</dbReference>
<reference key="1">
    <citation type="journal article" date="1988" name="Proc. Natl. Acad. Sci. U.S.A.">
        <title>Isolation and characterization of a Xenopus laevis C protein cDNA: structure and expression of a heterogeneous nuclear ribonucleoprotein core protein.</title>
        <authorList>
            <person name="Preugschat F."/>
            <person name="Wold B."/>
        </authorList>
    </citation>
    <scope>NUCLEOTIDE SEQUENCE [MRNA]</scope>
</reference>
<reference key="2">
    <citation type="submission" date="2004-05" db="EMBL/GenBank/DDBJ databases">
        <authorList>
            <consortium name="NIH - Xenopus Gene Collection (XGC) project"/>
        </authorList>
    </citation>
    <scope>NUCLEOTIDE SEQUENCE [LARGE SCALE MRNA]</scope>
    <source>
        <tissue>Embryo</tissue>
    </source>
</reference>
<name>HNRPC_XENLA</name>
<proteinExistence type="evidence at transcript level"/>
<comment type="function">
    <text evidence="1">Binds pre-mRNA and nucleates the assembly of 40S hnRNP particles. Interacts with poly-U tracts in the 3'-UTR or 5'-UTR of mRNA and modulates the stability and the level of translation of bound mRNA molecules. Single HNRNPC tetramers bind 230-240 nucleotides. Trimers of HNRNPC tetramers bind 700 nucleotides. May play a role in the early steps of spliceosome assembly and pre-mRNA splicing. N6-methyladenosine (m6A) has been shown to alter the local structure in mRNAs and long non-coding RNAs (lncRNAs) via a mechanism named 'm(6)A-switch', facilitating binding of HNRNPC, leading to regulation of mRNA splicing.</text>
</comment>
<comment type="subunit">
    <text evidence="1">Tetramer.</text>
</comment>
<comment type="subcellular location">
    <subcellularLocation>
        <location evidence="1">Nucleus</location>
    </subcellularLocation>
</comment>
<comment type="similarity">
    <text evidence="5">Belongs to the RRM HNRPC family. RALY subfamily.</text>
</comment>
<protein>
    <recommendedName>
        <fullName>Heterogeneous nuclear ribonucleoprotein C</fullName>
        <shortName>hnRNP C</shortName>
    </recommendedName>
    <alternativeName>
        <fullName>hnRNP core protein C</fullName>
    </alternativeName>
</protein>
<accession>P19600</accession>
<accession>Q6GR47</accession>
<feature type="chain" id="PRO_0000081847" description="Heterogeneous nuclear ribonucleoprotein C">
    <location>
        <begin position="1"/>
        <end position="282"/>
    </location>
</feature>
<feature type="domain" description="RRM" evidence="3">
    <location>
        <begin position="17"/>
        <end position="88"/>
    </location>
</feature>
<feature type="region of interest" description="Disordered" evidence="4">
    <location>
        <begin position="131"/>
        <end position="177"/>
    </location>
</feature>
<feature type="region of interest" description="Disordered" evidence="4">
    <location>
        <begin position="208"/>
        <end position="282"/>
    </location>
</feature>
<feature type="coiled-coil region" evidence="2">
    <location>
        <begin position="177"/>
        <end position="217"/>
    </location>
</feature>
<feature type="short sequence motif" description="Nuclear localization signal" evidence="2">
    <location>
        <begin position="141"/>
        <end position="147"/>
    </location>
</feature>
<feature type="compositionally biased region" description="Low complexity" evidence="4">
    <location>
        <begin position="161"/>
        <end position="172"/>
    </location>
</feature>
<feature type="compositionally biased region" description="Basic and acidic residues" evidence="4">
    <location>
        <begin position="208"/>
        <end position="217"/>
    </location>
</feature>
<feature type="compositionally biased region" description="Basic and acidic residues" evidence="4">
    <location>
        <begin position="224"/>
        <end position="235"/>
    </location>
</feature>
<feature type="compositionally biased region" description="Acidic residues" evidence="4">
    <location>
        <begin position="236"/>
        <end position="257"/>
    </location>
</feature>
<feature type="compositionally biased region" description="Acidic residues" evidence="4">
    <location>
        <begin position="265"/>
        <end position="282"/>
    </location>
</feature>
<evidence type="ECO:0000250" key="1">
    <source>
        <dbReference type="UniProtKB" id="P07910"/>
    </source>
</evidence>
<evidence type="ECO:0000255" key="2"/>
<evidence type="ECO:0000255" key="3">
    <source>
        <dbReference type="PROSITE-ProRule" id="PRU00176"/>
    </source>
</evidence>
<evidence type="ECO:0000256" key="4">
    <source>
        <dbReference type="SAM" id="MobiDB-lite"/>
    </source>
</evidence>
<evidence type="ECO:0000305" key="5"/>
<gene>
    <name type="primary">hnrnpc</name>
    <name type="synonym">hnrpc</name>
</gene>